<accession>Q8ES77</accession>
<name>GATB_OCEIH</name>
<evidence type="ECO:0000255" key="1">
    <source>
        <dbReference type="HAMAP-Rule" id="MF_00121"/>
    </source>
</evidence>
<comment type="function">
    <text evidence="1">Allows the formation of correctly charged Asn-tRNA(Asn) or Gln-tRNA(Gln) through the transamidation of misacylated Asp-tRNA(Asn) or Glu-tRNA(Gln) in organisms which lack either or both of asparaginyl-tRNA or glutaminyl-tRNA synthetases. The reaction takes place in the presence of glutamine and ATP through an activated phospho-Asp-tRNA(Asn) or phospho-Glu-tRNA(Gln).</text>
</comment>
<comment type="catalytic activity">
    <reaction evidence="1">
        <text>L-glutamyl-tRNA(Gln) + L-glutamine + ATP + H2O = L-glutaminyl-tRNA(Gln) + L-glutamate + ADP + phosphate + H(+)</text>
        <dbReference type="Rhea" id="RHEA:17521"/>
        <dbReference type="Rhea" id="RHEA-COMP:9681"/>
        <dbReference type="Rhea" id="RHEA-COMP:9684"/>
        <dbReference type="ChEBI" id="CHEBI:15377"/>
        <dbReference type="ChEBI" id="CHEBI:15378"/>
        <dbReference type="ChEBI" id="CHEBI:29985"/>
        <dbReference type="ChEBI" id="CHEBI:30616"/>
        <dbReference type="ChEBI" id="CHEBI:43474"/>
        <dbReference type="ChEBI" id="CHEBI:58359"/>
        <dbReference type="ChEBI" id="CHEBI:78520"/>
        <dbReference type="ChEBI" id="CHEBI:78521"/>
        <dbReference type="ChEBI" id="CHEBI:456216"/>
    </reaction>
</comment>
<comment type="catalytic activity">
    <reaction evidence="1">
        <text>L-aspartyl-tRNA(Asn) + L-glutamine + ATP + H2O = L-asparaginyl-tRNA(Asn) + L-glutamate + ADP + phosphate + 2 H(+)</text>
        <dbReference type="Rhea" id="RHEA:14513"/>
        <dbReference type="Rhea" id="RHEA-COMP:9674"/>
        <dbReference type="Rhea" id="RHEA-COMP:9677"/>
        <dbReference type="ChEBI" id="CHEBI:15377"/>
        <dbReference type="ChEBI" id="CHEBI:15378"/>
        <dbReference type="ChEBI" id="CHEBI:29985"/>
        <dbReference type="ChEBI" id="CHEBI:30616"/>
        <dbReference type="ChEBI" id="CHEBI:43474"/>
        <dbReference type="ChEBI" id="CHEBI:58359"/>
        <dbReference type="ChEBI" id="CHEBI:78515"/>
        <dbReference type="ChEBI" id="CHEBI:78516"/>
        <dbReference type="ChEBI" id="CHEBI:456216"/>
    </reaction>
</comment>
<comment type="subunit">
    <text evidence="1">Heterotrimer of A, B and C subunits.</text>
</comment>
<comment type="similarity">
    <text evidence="1">Belongs to the GatB/GatE family. GatB subfamily.</text>
</comment>
<sequence>MNFETIIGLEVHVELKTNSKIFSPSTNEFGSDPNTNVNPIDLGYPGTLPVLNEEAVNFAMKAAMALNCEIATDTKFDRKNYFYPDNPKAYQISQFDQPIGENGWIEIEVNGEKKKIGITRLHLEEDAGKLTHGEDGYSYVDFNRQGTPLIEIVSEPDMRSPEEAYAYLEKLKNIIQYTGVSDVKMQEGSLRCDANISLRPIGQEEFGTKAELKNLNSFSYVQKGLEFEEKRQEKELLSGGEILQETRRYDEKTKETILMRVKEGSDDYRYFPEPDLVPLYIDEEWKERVRSEIPELPDARLERYINELGLSEYDANVLTASKQMSDFFEEATAEGADMKQVSNWLMGEVSAYMNKHYKELDELAITPEALAKMINLIEDGTISSKIAKKVFAELVENGGDPQKIVEEKGLVQISDPAQLKQIVNEVLDQNEQSIIDFKNGKNKAKGFLVGQIMKATKGQANPPLVNKILAEELNNR</sequence>
<keyword id="KW-0067">ATP-binding</keyword>
<keyword id="KW-0436">Ligase</keyword>
<keyword id="KW-0547">Nucleotide-binding</keyword>
<keyword id="KW-0648">Protein biosynthesis</keyword>
<keyword id="KW-1185">Reference proteome</keyword>
<protein>
    <recommendedName>
        <fullName evidence="1">Aspartyl/glutamyl-tRNA(Asn/Gln) amidotransferase subunit B</fullName>
        <shortName evidence="1">Asp/Glu-ADT subunit B</shortName>
        <ecNumber evidence="1">6.3.5.-</ecNumber>
    </recommendedName>
</protein>
<dbReference type="EC" id="6.3.5.-" evidence="1"/>
<dbReference type="EMBL" id="BA000028">
    <property type="protein sequence ID" value="BAC12722.1"/>
    <property type="molecule type" value="Genomic_DNA"/>
</dbReference>
<dbReference type="RefSeq" id="WP_011065174.1">
    <property type="nucleotide sequence ID" value="NC_004193.1"/>
</dbReference>
<dbReference type="SMR" id="Q8ES77"/>
<dbReference type="STRING" id="221109.gene:10732987"/>
<dbReference type="KEGG" id="oih:OB0766"/>
<dbReference type="eggNOG" id="COG0064">
    <property type="taxonomic scope" value="Bacteria"/>
</dbReference>
<dbReference type="HOGENOM" id="CLU_019240_0_0_9"/>
<dbReference type="OrthoDB" id="9804078at2"/>
<dbReference type="PhylomeDB" id="Q8ES77"/>
<dbReference type="Proteomes" id="UP000000822">
    <property type="component" value="Chromosome"/>
</dbReference>
<dbReference type="GO" id="GO:0050566">
    <property type="term" value="F:asparaginyl-tRNA synthase (glutamine-hydrolyzing) activity"/>
    <property type="evidence" value="ECO:0007669"/>
    <property type="project" value="RHEA"/>
</dbReference>
<dbReference type="GO" id="GO:0005524">
    <property type="term" value="F:ATP binding"/>
    <property type="evidence" value="ECO:0007669"/>
    <property type="project" value="UniProtKB-KW"/>
</dbReference>
<dbReference type="GO" id="GO:0050567">
    <property type="term" value="F:glutaminyl-tRNA synthase (glutamine-hydrolyzing) activity"/>
    <property type="evidence" value="ECO:0007669"/>
    <property type="project" value="UniProtKB-UniRule"/>
</dbReference>
<dbReference type="GO" id="GO:0070681">
    <property type="term" value="P:glutaminyl-tRNAGln biosynthesis via transamidation"/>
    <property type="evidence" value="ECO:0007669"/>
    <property type="project" value="TreeGrafter"/>
</dbReference>
<dbReference type="GO" id="GO:0006412">
    <property type="term" value="P:translation"/>
    <property type="evidence" value="ECO:0007669"/>
    <property type="project" value="UniProtKB-UniRule"/>
</dbReference>
<dbReference type="FunFam" id="1.10.10.410:FF:000001">
    <property type="entry name" value="Aspartyl/glutamyl-tRNA(Asn/Gln) amidotransferase subunit B"/>
    <property type="match status" value="1"/>
</dbReference>
<dbReference type="FunFam" id="1.10.150.380:FF:000001">
    <property type="entry name" value="Aspartyl/glutamyl-tRNA(Asn/Gln) amidotransferase subunit B"/>
    <property type="match status" value="1"/>
</dbReference>
<dbReference type="Gene3D" id="1.10.10.410">
    <property type="match status" value="1"/>
</dbReference>
<dbReference type="Gene3D" id="1.10.150.380">
    <property type="entry name" value="GatB domain, N-terminal subdomain"/>
    <property type="match status" value="1"/>
</dbReference>
<dbReference type="HAMAP" id="MF_00121">
    <property type="entry name" value="GatB"/>
    <property type="match status" value="1"/>
</dbReference>
<dbReference type="InterPro" id="IPR017959">
    <property type="entry name" value="Asn/Gln-tRNA_amidoTrfase_suB/E"/>
</dbReference>
<dbReference type="InterPro" id="IPR006075">
    <property type="entry name" value="Asn/Gln-tRNA_Trfase_suB/E_cat"/>
</dbReference>
<dbReference type="InterPro" id="IPR018027">
    <property type="entry name" value="Asn/Gln_amidotransferase"/>
</dbReference>
<dbReference type="InterPro" id="IPR003789">
    <property type="entry name" value="Asn/Gln_tRNA_amidoTrase-B-like"/>
</dbReference>
<dbReference type="InterPro" id="IPR004413">
    <property type="entry name" value="GatB"/>
</dbReference>
<dbReference type="InterPro" id="IPR042114">
    <property type="entry name" value="GatB_C_1"/>
</dbReference>
<dbReference type="InterPro" id="IPR023168">
    <property type="entry name" value="GatB_Yqey_C_2"/>
</dbReference>
<dbReference type="InterPro" id="IPR017958">
    <property type="entry name" value="Gln-tRNA_amidoTrfase_suB_CS"/>
</dbReference>
<dbReference type="InterPro" id="IPR014746">
    <property type="entry name" value="Gln_synth/guanido_kin_cat_dom"/>
</dbReference>
<dbReference type="NCBIfam" id="TIGR00133">
    <property type="entry name" value="gatB"/>
    <property type="match status" value="1"/>
</dbReference>
<dbReference type="NCBIfam" id="NF004011">
    <property type="entry name" value="PRK05477.1-1"/>
    <property type="match status" value="1"/>
</dbReference>
<dbReference type="NCBIfam" id="NF004012">
    <property type="entry name" value="PRK05477.1-2"/>
    <property type="match status" value="1"/>
</dbReference>
<dbReference type="NCBIfam" id="NF004014">
    <property type="entry name" value="PRK05477.1-4"/>
    <property type="match status" value="1"/>
</dbReference>
<dbReference type="PANTHER" id="PTHR11659">
    <property type="entry name" value="GLUTAMYL-TRNA GLN AMIDOTRANSFERASE SUBUNIT B MITOCHONDRIAL AND PROKARYOTIC PET112-RELATED"/>
    <property type="match status" value="1"/>
</dbReference>
<dbReference type="PANTHER" id="PTHR11659:SF0">
    <property type="entry name" value="GLUTAMYL-TRNA(GLN) AMIDOTRANSFERASE SUBUNIT B, MITOCHONDRIAL"/>
    <property type="match status" value="1"/>
</dbReference>
<dbReference type="Pfam" id="PF02934">
    <property type="entry name" value="GatB_N"/>
    <property type="match status" value="1"/>
</dbReference>
<dbReference type="Pfam" id="PF02637">
    <property type="entry name" value="GatB_Yqey"/>
    <property type="match status" value="1"/>
</dbReference>
<dbReference type="SMART" id="SM00845">
    <property type="entry name" value="GatB_Yqey"/>
    <property type="match status" value="1"/>
</dbReference>
<dbReference type="SUPFAM" id="SSF89095">
    <property type="entry name" value="GatB/YqeY motif"/>
    <property type="match status" value="1"/>
</dbReference>
<dbReference type="SUPFAM" id="SSF55931">
    <property type="entry name" value="Glutamine synthetase/guanido kinase"/>
    <property type="match status" value="1"/>
</dbReference>
<dbReference type="PROSITE" id="PS01234">
    <property type="entry name" value="GATB"/>
    <property type="match status" value="1"/>
</dbReference>
<reference key="1">
    <citation type="journal article" date="2002" name="Nucleic Acids Res.">
        <title>Genome sequence of Oceanobacillus iheyensis isolated from the Iheya Ridge and its unexpected adaptive capabilities to extreme environments.</title>
        <authorList>
            <person name="Takami H."/>
            <person name="Takaki Y."/>
            <person name="Uchiyama I."/>
        </authorList>
    </citation>
    <scope>NUCLEOTIDE SEQUENCE [LARGE SCALE GENOMIC DNA]</scope>
    <source>
        <strain>DSM 14371 / CIP 107618 / JCM 11309 / KCTC 3954 / HTE831</strain>
    </source>
</reference>
<gene>
    <name evidence="1" type="primary">gatB</name>
    <name type="ordered locus">OB0766</name>
</gene>
<proteinExistence type="inferred from homology"/>
<organism>
    <name type="scientific">Oceanobacillus iheyensis (strain DSM 14371 / CIP 107618 / JCM 11309 / KCTC 3954 / HTE831)</name>
    <dbReference type="NCBI Taxonomy" id="221109"/>
    <lineage>
        <taxon>Bacteria</taxon>
        <taxon>Bacillati</taxon>
        <taxon>Bacillota</taxon>
        <taxon>Bacilli</taxon>
        <taxon>Bacillales</taxon>
        <taxon>Bacillaceae</taxon>
        <taxon>Oceanobacillus</taxon>
    </lineage>
</organism>
<feature type="chain" id="PRO_0000148819" description="Aspartyl/glutamyl-tRNA(Asn/Gln) amidotransferase subunit B">
    <location>
        <begin position="1"/>
        <end position="476"/>
    </location>
</feature>